<name>YNJ6_CAEEL</name>
<gene>
    <name type="ORF">R10E11.6</name>
</gene>
<proteinExistence type="predicted"/>
<dbReference type="EMBL" id="Z29095">
    <property type="protein sequence ID" value="CAJ76940.1"/>
    <property type="molecule type" value="Genomic_DNA"/>
</dbReference>
<dbReference type="EMBL" id="Z29095">
    <property type="protein sequence ID" value="CAJ76941.1"/>
    <property type="molecule type" value="Genomic_DNA"/>
</dbReference>
<dbReference type="PIR" id="S40718">
    <property type="entry name" value="S40718"/>
</dbReference>
<dbReference type="RefSeq" id="NP_001040862.1">
    <molecule id="P34550-1"/>
    <property type="nucleotide sequence ID" value="NM_001047397.6"/>
</dbReference>
<dbReference type="RefSeq" id="NP_001040863.1">
    <molecule id="P34550-2"/>
    <property type="nucleotide sequence ID" value="NM_001047398.6"/>
</dbReference>
<dbReference type="SMR" id="P34550"/>
<dbReference type="BioGRID" id="532955">
    <property type="interactions" value="1"/>
</dbReference>
<dbReference type="FunCoup" id="P34550">
    <property type="interactions" value="2"/>
</dbReference>
<dbReference type="STRING" id="6239.R10E11.6a.1"/>
<dbReference type="PaxDb" id="6239-R10E11.6a"/>
<dbReference type="PeptideAtlas" id="P34550"/>
<dbReference type="EnsemblMetazoa" id="R10E11.6a.1">
    <molecule id="P34550-1"/>
    <property type="protein sequence ID" value="R10E11.6a.1"/>
    <property type="gene ID" value="WBGene00011218"/>
</dbReference>
<dbReference type="EnsemblMetazoa" id="R10E11.6a.2">
    <molecule id="P34550-1"/>
    <property type="protein sequence ID" value="R10E11.6a.2"/>
    <property type="gene ID" value="WBGene00011218"/>
</dbReference>
<dbReference type="EnsemblMetazoa" id="R10E11.6b.1">
    <molecule id="P34550-2"/>
    <property type="protein sequence ID" value="R10E11.6b.1"/>
    <property type="gene ID" value="WBGene00011218"/>
</dbReference>
<dbReference type="GeneID" id="3565637"/>
<dbReference type="KEGG" id="cel:CELE_R10E11.6"/>
<dbReference type="UCSC" id="R10E11.6b">
    <molecule id="P34550-1"/>
    <property type="organism name" value="c. elegans"/>
</dbReference>
<dbReference type="AGR" id="WB:WBGene00011218"/>
<dbReference type="CTD" id="3565637"/>
<dbReference type="WormBase" id="R10E11.6a">
    <molecule id="P34550-1"/>
    <property type="protein sequence ID" value="CE39757"/>
    <property type="gene ID" value="WBGene00011218"/>
</dbReference>
<dbReference type="WormBase" id="R10E11.6b">
    <molecule id="P34550-2"/>
    <property type="protein sequence ID" value="CE39758"/>
    <property type="gene ID" value="WBGene00011218"/>
</dbReference>
<dbReference type="eggNOG" id="KOG0998">
    <property type="taxonomic scope" value="Eukaryota"/>
</dbReference>
<dbReference type="GeneTree" id="ENSGT00390000010789"/>
<dbReference type="HOGENOM" id="CLU_840013_0_0_1"/>
<dbReference type="InParanoid" id="P34550"/>
<dbReference type="OMA" id="LSHIWSA"/>
<dbReference type="OrthoDB" id="524326at2759"/>
<dbReference type="PRO" id="PR:P34550"/>
<dbReference type="Proteomes" id="UP000001940">
    <property type="component" value="Chromosome III"/>
</dbReference>
<dbReference type="Bgee" id="WBGene00011218">
    <property type="expression patterns" value="Expressed in pharyngeal muscle cell (C elegans) and 4 other cell types or tissues"/>
</dbReference>
<dbReference type="CDD" id="cd00052">
    <property type="entry name" value="EH"/>
    <property type="match status" value="1"/>
</dbReference>
<dbReference type="Gene3D" id="1.10.238.10">
    <property type="entry name" value="EF-hand"/>
    <property type="match status" value="1"/>
</dbReference>
<dbReference type="InterPro" id="IPR011992">
    <property type="entry name" value="EF-hand-dom_pair"/>
</dbReference>
<dbReference type="InterPro" id="IPR000261">
    <property type="entry name" value="EH_dom"/>
</dbReference>
<dbReference type="InterPro" id="IPR039656">
    <property type="entry name" value="SYNRG"/>
</dbReference>
<dbReference type="PANTHER" id="PTHR15463">
    <property type="entry name" value="AP1 GAMMA SUBUNIT BINDING PROTEIN 1"/>
    <property type="match status" value="1"/>
</dbReference>
<dbReference type="PANTHER" id="PTHR15463:SF2">
    <property type="entry name" value="SYNERGIN GAMMA"/>
    <property type="match status" value="1"/>
</dbReference>
<dbReference type="SUPFAM" id="SSF47473">
    <property type="entry name" value="EF-hand"/>
    <property type="match status" value="1"/>
</dbReference>
<dbReference type="PROSITE" id="PS50031">
    <property type="entry name" value="EH"/>
    <property type="match status" value="1"/>
</dbReference>
<keyword id="KW-0025">Alternative splicing</keyword>
<keyword id="KW-1185">Reference proteome</keyword>
<comment type="alternative products">
    <event type="alternative splicing"/>
    <isoform>
        <id>P34550-1</id>
        <name>a</name>
        <sequence type="displayed"/>
    </isoform>
    <isoform>
        <id>P34550-2</id>
        <name>b</name>
        <sequence type="described" ref="VSP_019767 VSP_019768"/>
    </isoform>
</comment>
<sequence>MEGKLSMDSQILEEVIRSGNIPCHGRTGMLCAGGGLLPPALLDESRVPKFYLDALVASGGTSSTALPNTGLVYNLMGTSGLPKDVLSHIWSAVNRAKPGQLTRPEFFSLLALIALAQKGESLAALCAMDSLPIPYLNPVQAFPTASNPAPTTNTSSSFVPFGKIKPSAFIPTSLLPRRSMRKKKESDSKEVSAHNSPAKGAAHDLAGLDFGSDISSMKEEIKDINETPTQSCWRETVHAIYIVVEEANQLFKDSKKEVIQEISETEKGSAYFKSLSKAFDTLERVCKSAGVQLSVQSTKEAEYCRNLRRKWETFMDTTPEQNVEMTDDRKCAICCQPVQNPIDYGGQCFDVTCANLWVNGVSSTLPSLHLK</sequence>
<accession>P34550</accession>
<accession>Q2EEP4</accession>
<accession>Q2EEP5</accession>
<evidence type="ECO:0000255" key="1">
    <source>
        <dbReference type="PROSITE-ProRule" id="PRU00077"/>
    </source>
</evidence>
<evidence type="ECO:0000256" key="2">
    <source>
        <dbReference type="SAM" id="MobiDB-lite"/>
    </source>
</evidence>
<evidence type="ECO:0000305" key="3"/>
<feature type="chain" id="PRO_0000065432" description="Uncharacterized protein R10E11.6">
    <location>
        <begin position="1"/>
        <end position="371"/>
    </location>
</feature>
<feature type="domain" description="EH" evidence="1">
    <location>
        <begin position="43"/>
        <end position="148"/>
    </location>
</feature>
<feature type="region of interest" description="Disordered" evidence="2">
    <location>
        <begin position="179"/>
        <end position="205"/>
    </location>
</feature>
<feature type="splice variant" id="VSP_019767" description="In isoform b." evidence="3">
    <original>KC</original>
    <variation>YI</variation>
    <location>
        <begin position="330"/>
        <end position="331"/>
    </location>
</feature>
<feature type="splice variant" id="VSP_019768" description="In isoform b." evidence="3">
    <location>
        <begin position="332"/>
        <end position="371"/>
    </location>
</feature>
<protein>
    <recommendedName>
        <fullName>Uncharacterized protein R10E11.6</fullName>
    </recommendedName>
</protein>
<reference key="1">
    <citation type="journal article" date="1994" name="Nature">
        <title>2.2 Mb of contiguous nucleotide sequence from chromosome III of C. elegans.</title>
        <authorList>
            <person name="Wilson R."/>
            <person name="Ainscough R."/>
            <person name="Anderson K."/>
            <person name="Baynes C."/>
            <person name="Berks M."/>
            <person name="Bonfield J."/>
            <person name="Burton J."/>
            <person name="Connell M."/>
            <person name="Copsey T."/>
            <person name="Cooper J."/>
            <person name="Coulson A."/>
            <person name="Craxton M."/>
            <person name="Dear S."/>
            <person name="Du Z."/>
            <person name="Durbin R."/>
            <person name="Favello A."/>
            <person name="Fraser A."/>
            <person name="Fulton L."/>
            <person name="Gardner A."/>
            <person name="Green P."/>
            <person name="Hawkins T."/>
            <person name="Hillier L."/>
            <person name="Jier M."/>
            <person name="Johnston L."/>
            <person name="Jones M."/>
            <person name="Kershaw J."/>
            <person name="Kirsten J."/>
            <person name="Laisster N."/>
            <person name="Latreille P."/>
            <person name="Lightning J."/>
            <person name="Lloyd C."/>
            <person name="Mortimore B."/>
            <person name="O'Callaghan M."/>
            <person name="Parsons J."/>
            <person name="Percy C."/>
            <person name="Rifken L."/>
            <person name="Roopra A."/>
            <person name="Saunders D."/>
            <person name="Shownkeen R."/>
            <person name="Sims M."/>
            <person name="Smaldon N."/>
            <person name="Smith A."/>
            <person name="Smith M."/>
            <person name="Sonnhammer E."/>
            <person name="Staden R."/>
            <person name="Sulston J."/>
            <person name="Thierry-Mieg J."/>
            <person name="Thomas K."/>
            <person name="Vaudin M."/>
            <person name="Vaughan K."/>
            <person name="Waterston R."/>
            <person name="Watson A."/>
            <person name="Weinstock L."/>
            <person name="Wilkinson-Sproat J."/>
            <person name="Wohldman P."/>
        </authorList>
    </citation>
    <scope>NUCLEOTIDE SEQUENCE [LARGE SCALE GENOMIC DNA]</scope>
    <source>
        <strain>Bristol N2</strain>
    </source>
</reference>
<reference key="2">
    <citation type="journal article" date="1998" name="Science">
        <title>Genome sequence of the nematode C. elegans: a platform for investigating biology.</title>
        <authorList>
            <consortium name="The C. elegans sequencing consortium"/>
        </authorList>
    </citation>
    <scope>NUCLEOTIDE SEQUENCE [LARGE SCALE GENOMIC DNA]</scope>
    <scope>ALTERNATIVE SPLICING</scope>
    <source>
        <strain>Bristol N2</strain>
    </source>
</reference>
<organism>
    <name type="scientific">Caenorhabditis elegans</name>
    <dbReference type="NCBI Taxonomy" id="6239"/>
    <lineage>
        <taxon>Eukaryota</taxon>
        <taxon>Metazoa</taxon>
        <taxon>Ecdysozoa</taxon>
        <taxon>Nematoda</taxon>
        <taxon>Chromadorea</taxon>
        <taxon>Rhabditida</taxon>
        <taxon>Rhabditina</taxon>
        <taxon>Rhabditomorpha</taxon>
        <taxon>Rhabditoidea</taxon>
        <taxon>Rhabditidae</taxon>
        <taxon>Peloderinae</taxon>
        <taxon>Caenorhabditis</taxon>
    </lineage>
</organism>